<sequence length="512" mass="57126">MVSKLDKYWQHPALYWPLLILFAAATPFTFAPYYHFWLMPLIFGAFVRLIELRPRFAVSSAYLFGLTAYTTQFYWIHTALHDVSGLPDLYAVPLTFLLPAYLALYPALCFWLWKKFTLPRGIKIGLVLPILWTLTEFARERFLTGFGWGAIGYSQITPDSPLAGFAPFGGIHMVTLATAFLGVWLVLASDNTARSGKRLLPIILIAALLAAGYTARQTDFTRPDGSRSTVALLQGNIDQTLKWREDQVIPTIQKYYEQVGKTTADIVILPETAIPVMRQNLPENILAKFAEQAQNNGSALAVGISQYTSDGNGYENAVINLTGYQENNQDGIPYYAKNHLVPFGEYKPLPFLTTPLYKMMNMPLSDFRKGGGKQSALLMKNQKIAFNICYEDGFGDELIAAAKDATLLANASNMAWYGKSNAMYQHLQQSQARAMELGRYMVRATNTGATAIISPKGNIIAQAQPDTETVLEGHIKGYVGETPYMKTGSSWWLMGILTLAALILFIFRNKEH</sequence>
<gene>
    <name evidence="1" type="primary">lnt</name>
    <name type="ordered locus">NMA0918</name>
</gene>
<proteinExistence type="inferred from homology"/>
<accession>Q9JVA8</accession>
<accession>A1IQW5</accession>
<name>LNT_NEIMA</name>
<protein>
    <recommendedName>
        <fullName evidence="1">Apolipoprotein N-acyltransferase</fullName>
        <shortName evidence="1">ALP N-acyltransferase</shortName>
        <ecNumber evidence="1">2.3.1.269</ecNumber>
    </recommendedName>
</protein>
<organism>
    <name type="scientific">Neisseria meningitidis serogroup A / serotype 4A (strain DSM 15465 / Z2491)</name>
    <dbReference type="NCBI Taxonomy" id="122587"/>
    <lineage>
        <taxon>Bacteria</taxon>
        <taxon>Pseudomonadati</taxon>
        <taxon>Pseudomonadota</taxon>
        <taxon>Betaproteobacteria</taxon>
        <taxon>Neisseriales</taxon>
        <taxon>Neisseriaceae</taxon>
        <taxon>Neisseria</taxon>
    </lineage>
</organism>
<reference key="1">
    <citation type="journal article" date="2000" name="Nature">
        <title>Complete DNA sequence of a serogroup A strain of Neisseria meningitidis Z2491.</title>
        <authorList>
            <person name="Parkhill J."/>
            <person name="Achtman M."/>
            <person name="James K.D."/>
            <person name="Bentley S.D."/>
            <person name="Churcher C.M."/>
            <person name="Klee S.R."/>
            <person name="Morelli G."/>
            <person name="Basham D."/>
            <person name="Brown D."/>
            <person name="Chillingworth T."/>
            <person name="Davies R.M."/>
            <person name="Davis P."/>
            <person name="Devlin K."/>
            <person name="Feltwell T."/>
            <person name="Hamlin N."/>
            <person name="Holroyd S."/>
            <person name="Jagels K."/>
            <person name="Leather S."/>
            <person name="Moule S."/>
            <person name="Mungall K.L."/>
            <person name="Quail M.A."/>
            <person name="Rajandream M.A."/>
            <person name="Rutherford K.M."/>
            <person name="Simmonds M."/>
            <person name="Skelton J."/>
            <person name="Whitehead S."/>
            <person name="Spratt B.G."/>
            <person name="Barrell B.G."/>
        </authorList>
    </citation>
    <scope>NUCLEOTIDE SEQUENCE [LARGE SCALE GENOMIC DNA]</scope>
    <source>
        <strain>DSM 15465 / Z2491</strain>
    </source>
</reference>
<evidence type="ECO:0000255" key="1">
    <source>
        <dbReference type="HAMAP-Rule" id="MF_01148"/>
    </source>
</evidence>
<comment type="function">
    <text evidence="1">Catalyzes the phospholipid dependent N-acylation of the N-terminal cysteine of apolipoprotein, the last step in lipoprotein maturation.</text>
</comment>
<comment type="catalytic activity">
    <reaction evidence="1">
        <text>N-terminal S-1,2-diacyl-sn-glyceryl-L-cysteinyl-[lipoprotein] + a glycerophospholipid = N-acyl-S-1,2-diacyl-sn-glyceryl-L-cysteinyl-[lipoprotein] + a 2-acyl-sn-glycero-3-phospholipid + H(+)</text>
        <dbReference type="Rhea" id="RHEA:48228"/>
        <dbReference type="Rhea" id="RHEA-COMP:14681"/>
        <dbReference type="Rhea" id="RHEA-COMP:14684"/>
        <dbReference type="ChEBI" id="CHEBI:15378"/>
        <dbReference type="ChEBI" id="CHEBI:136912"/>
        <dbReference type="ChEBI" id="CHEBI:140656"/>
        <dbReference type="ChEBI" id="CHEBI:140657"/>
        <dbReference type="ChEBI" id="CHEBI:140660"/>
        <dbReference type="EC" id="2.3.1.269"/>
    </reaction>
</comment>
<comment type="pathway">
    <text evidence="1">Protein modification; lipoprotein biosynthesis (N-acyl transfer).</text>
</comment>
<comment type="subcellular location">
    <subcellularLocation>
        <location evidence="1">Cell inner membrane</location>
        <topology evidence="1">Multi-pass membrane protein</topology>
    </subcellularLocation>
</comment>
<comment type="similarity">
    <text evidence="1">Belongs to the CN hydrolase family. Apolipoprotein N-acyltransferase subfamily.</text>
</comment>
<dbReference type="EC" id="2.3.1.269" evidence="1"/>
<dbReference type="EMBL" id="AL157959">
    <property type="protein sequence ID" value="CAM08149.1"/>
    <property type="molecule type" value="Genomic_DNA"/>
</dbReference>
<dbReference type="PIR" id="E81938">
    <property type="entry name" value="E81938"/>
</dbReference>
<dbReference type="SMR" id="Q9JVA8"/>
<dbReference type="EnsemblBacteria" id="CAM08149">
    <property type="protein sequence ID" value="CAM08149"/>
    <property type="gene ID" value="NMA0918"/>
</dbReference>
<dbReference type="KEGG" id="nma:NMA0918"/>
<dbReference type="HOGENOM" id="CLU_019563_3_0_4"/>
<dbReference type="UniPathway" id="UPA00666"/>
<dbReference type="Proteomes" id="UP000000626">
    <property type="component" value="Chromosome"/>
</dbReference>
<dbReference type="GO" id="GO:0005886">
    <property type="term" value="C:plasma membrane"/>
    <property type="evidence" value="ECO:0007669"/>
    <property type="project" value="UniProtKB-SubCell"/>
</dbReference>
<dbReference type="GO" id="GO:0016410">
    <property type="term" value="F:N-acyltransferase activity"/>
    <property type="evidence" value="ECO:0007669"/>
    <property type="project" value="UniProtKB-UniRule"/>
</dbReference>
<dbReference type="GO" id="GO:0042158">
    <property type="term" value="P:lipoprotein biosynthetic process"/>
    <property type="evidence" value="ECO:0007669"/>
    <property type="project" value="UniProtKB-UniRule"/>
</dbReference>
<dbReference type="CDD" id="cd07571">
    <property type="entry name" value="ALP_N-acyl_transferase"/>
    <property type="match status" value="1"/>
</dbReference>
<dbReference type="Gene3D" id="3.60.110.10">
    <property type="entry name" value="Carbon-nitrogen hydrolase"/>
    <property type="match status" value="1"/>
</dbReference>
<dbReference type="HAMAP" id="MF_01148">
    <property type="entry name" value="Lnt"/>
    <property type="match status" value="1"/>
</dbReference>
<dbReference type="InterPro" id="IPR004563">
    <property type="entry name" value="Apolipo_AcylTrfase"/>
</dbReference>
<dbReference type="InterPro" id="IPR003010">
    <property type="entry name" value="C-N_Hydrolase"/>
</dbReference>
<dbReference type="InterPro" id="IPR036526">
    <property type="entry name" value="C-N_Hydrolase_sf"/>
</dbReference>
<dbReference type="InterPro" id="IPR045378">
    <property type="entry name" value="LNT_N"/>
</dbReference>
<dbReference type="NCBIfam" id="TIGR00546">
    <property type="entry name" value="lnt"/>
    <property type="match status" value="1"/>
</dbReference>
<dbReference type="PANTHER" id="PTHR38686">
    <property type="entry name" value="APOLIPOPROTEIN N-ACYLTRANSFERASE"/>
    <property type="match status" value="1"/>
</dbReference>
<dbReference type="PANTHER" id="PTHR38686:SF1">
    <property type="entry name" value="APOLIPOPROTEIN N-ACYLTRANSFERASE"/>
    <property type="match status" value="1"/>
</dbReference>
<dbReference type="Pfam" id="PF00795">
    <property type="entry name" value="CN_hydrolase"/>
    <property type="match status" value="1"/>
</dbReference>
<dbReference type="Pfam" id="PF20154">
    <property type="entry name" value="LNT_N"/>
    <property type="match status" value="1"/>
</dbReference>
<dbReference type="SUPFAM" id="SSF56317">
    <property type="entry name" value="Carbon-nitrogen hydrolase"/>
    <property type="match status" value="1"/>
</dbReference>
<dbReference type="PROSITE" id="PS50263">
    <property type="entry name" value="CN_HYDROLASE"/>
    <property type="match status" value="1"/>
</dbReference>
<keyword id="KW-0012">Acyltransferase</keyword>
<keyword id="KW-0997">Cell inner membrane</keyword>
<keyword id="KW-1003">Cell membrane</keyword>
<keyword id="KW-0472">Membrane</keyword>
<keyword id="KW-0808">Transferase</keyword>
<keyword id="KW-0812">Transmembrane</keyword>
<keyword id="KW-1133">Transmembrane helix</keyword>
<feature type="chain" id="PRO_0000178076" description="Apolipoprotein N-acyltransferase">
    <location>
        <begin position="1"/>
        <end position="512"/>
    </location>
</feature>
<feature type="transmembrane region" description="Helical" evidence="1">
    <location>
        <begin position="5"/>
        <end position="25"/>
    </location>
</feature>
<feature type="transmembrane region" description="Helical" evidence="1">
    <location>
        <begin position="56"/>
        <end position="76"/>
    </location>
</feature>
<feature type="transmembrane region" description="Helical" evidence="1">
    <location>
        <begin position="92"/>
        <end position="112"/>
    </location>
</feature>
<feature type="transmembrane region" description="Helical" evidence="1">
    <location>
        <begin position="118"/>
        <end position="138"/>
    </location>
</feature>
<feature type="transmembrane region" description="Helical" evidence="1">
    <location>
        <begin position="168"/>
        <end position="188"/>
    </location>
</feature>
<feature type="transmembrane region" description="Helical" evidence="1">
    <location>
        <begin position="195"/>
        <end position="215"/>
    </location>
</feature>
<feature type="transmembrane region" description="Helical" evidence="1">
    <location>
        <begin position="487"/>
        <end position="507"/>
    </location>
</feature>
<feature type="domain" description="CN hydrolase" evidence="1">
    <location>
        <begin position="233"/>
        <end position="477"/>
    </location>
</feature>
<feature type="active site" description="Proton acceptor" evidence="1">
    <location>
        <position position="271"/>
    </location>
</feature>
<feature type="active site" evidence="1">
    <location>
        <position position="337"/>
    </location>
</feature>
<feature type="active site" description="Nucleophile" evidence="1">
    <location>
        <position position="389"/>
    </location>
</feature>